<keyword id="KW-1185">Reference proteome</keyword>
<keyword id="KW-0687">Ribonucleoprotein</keyword>
<keyword id="KW-0689">Ribosomal protein</keyword>
<gene>
    <name type="primary">RPL17</name>
    <name type="ordered locus">TP02_0720</name>
</gene>
<reference key="1">
    <citation type="journal article" date="2005" name="Science">
        <title>Genome sequence of Theileria parva, a bovine pathogen that transforms lymphocytes.</title>
        <authorList>
            <person name="Gardner M.J."/>
            <person name="Bishop R."/>
            <person name="Shah T."/>
            <person name="de Villiers E.P."/>
            <person name="Carlton J.M."/>
            <person name="Hall N."/>
            <person name="Ren Q."/>
            <person name="Paulsen I.T."/>
            <person name="Pain A."/>
            <person name="Berriman M."/>
            <person name="Wilson R.J.M."/>
            <person name="Sato S."/>
            <person name="Ralph S.A."/>
            <person name="Mann D.J."/>
            <person name="Xiong Z."/>
            <person name="Shallom S.J."/>
            <person name="Weidman J."/>
            <person name="Jiang L."/>
            <person name="Lynn J."/>
            <person name="Weaver B."/>
            <person name="Shoaibi A."/>
            <person name="Domingo A.R."/>
            <person name="Wasawo D."/>
            <person name="Crabtree J."/>
            <person name="Wortman J.R."/>
            <person name="Haas B."/>
            <person name="Angiuoli S.V."/>
            <person name="Creasy T.H."/>
            <person name="Lu C."/>
            <person name="Suh B."/>
            <person name="Silva J.C."/>
            <person name="Utterback T.R."/>
            <person name="Feldblyum T.V."/>
            <person name="Pertea M."/>
            <person name="Allen J."/>
            <person name="Nierman W.C."/>
            <person name="Taracha E.L.N."/>
            <person name="Salzberg S.L."/>
            <person name="White O.R."/>
            <person name="Fitzhugh H.A."/>
            <person name="Morzaria S."/>
            <person name="Venter J.C."/>
            <person name="Fraser C.M."/>
            <person name="Nene V."/>
        </authorList>
    </citation>
    <scope>NUCLEOTIDE SEQUENCE [LARGE SCALE GENOMIC DNA]</scope>
    <source>
        <strain>Muguga</strain>
    </source>
</reference>
<proteinExistence type="inferred from homology"/>
<protein>
    <recommendedName>
        <fullName evidence="1">Large ribosomal subunit protein uL22</fullName>
    </recommendedName>
    <alternativeName>
        <fullName>60S ribosomal protein L17</fullName>
    </alternativeName>
</protein>
<dbReference type="EMBL" id="AAGK01000002">
    <property type="protein sequence ID" value="EAN33004.1"/>
    <property type="molecule type" value="Genomic_DNA"/>
</dbReference>
<dbReference type="RefSeq" id="XP_765287.1">
    <property type="nucleotide sequence ID" value="XM_760194.1"/>
</dbReference>
<dbReference type="SMR" id="Q4N4B9"/>
<dbReference type="FunCoup" id="Q4N4B9">
    <property type="interactions" value="342"/>
</dbReference>
<dbReference type="STRING" id="5875.Q4N4B9"/>
<dbReference type="EnsemblProtists" id="EAN33004">
    <property type="protein sequence ID" value="EAN33004"/>
    <property type="gene ID" value="TP02_0720"/>
</dbReference>
<dbReference type="GeneID" id="3501414"/>
<dbReference type="KEGG" id="tpv:TP02_0720"/>
<dbReference type="VEuPathDB" id="PiroplasmaDB:TpMuguga_02g00720"/>
<dbReference type="eggNOG" id="KOG3353">
    <property type="taxonomic scope" value="Eukaryota"/>
</dbReference>
<dbReference type="InParanoid" id="Q4N4B9"/>
<dbReference type="OMA" id="NTYETAR"/>
<dbReference type="Proteomes" id="UP000001949">
    <property type="component" value="Unassembled WGS sequence"/>
</dbReference>
<dbReference type="GO" id="GO:0022625">
    <property type="term" value="C:cytosolic large ribosomal subunit"/>
    <property type="evidence" value="ECO:0007669"/>
    <property type="project" value="TreeGrafter"/>
</dbReference>
<dbReference type="GO" id="GO:0003735">
    <property type="term" value="F:structural constituent of ribosome"/>
    <property type="evidence" value="ECO:0007669"/>
    <property type="project" value="InterPro"/>
</dbReference>
<dbReference type="GO" id="GO:0002181">
    <property type="term" value="P:cytoplasmic translation"/>
    <property type="evidence" value="ECO:0007669"/>
    <property type="project" value="TreeGrafter"/>
</dbReference>
<dbReference type="CDD" id="cd00336">
    <property type="entry name" value="Ribosomal_L22"/>
    <property type="match status" value="1"/>
</dbReference>
<dbReference type="FunFam" id="3.90.470.10:FF:000012">
    <property type="entry name" value="60S ribosomal protein L17"/>
    <property type="match status" value="1"/>
</dbReference>
<dbReference type="Gene3D" id="3.90.470.10">
    <property type="entry name" value="Ribosomal protein L22/L17"/>
    <property type="match status" value="1"/>
</dbReference>
<dbReference type="InterPro" id="IPR001063">
    <property type="entry name" value="Ribosomal_uL22"/>
</dbReference>
<dbReference type="InterPro" id="IPR005721">
    <property type="entry name" value="Ribosomal_uL22_euk/arc"/>
</dbReference>
<dbReference type="InterPro" id="IPR036394">
    <property type="entry name" value="Ribosomal_uL22_sf"/>
</dbReference>
<dbReference type="NCBIfam" id="TIGR01038">
    <property type="entry name" value="uL22_arch_euk"/>
    <property type="match status" value="1"/>
</dbReference>
<dbReference type="PANTHER" id="PTHR11593">
    <property type="entry name" value="60S RIBOSOMAL PROTEIN L17"/>
    <property type="match status" value="1"/>
</dbReference>
<dbReference type="PANTHER" id="PTHR11593:SF10">
    <property type="entry name" value="60S RIBOSOMAL PROTEIN L17"/>
    <property type="match status" value="1"/>
</dbReference>
<dbReference type="Pfam" id="PF00237">
    <property type="entry name" value="Ribosomal_L22"/>
    <property type="match status" value="1"/>
</dbReference>
<dbReference type="SUPFAM" id="SSF54843">
    <property type="entry name" value="Ribosomal protein L22"/>
    <property type="match status" value="1"/>
</dbReference>
<organism>
    <name type="scientific">Theileria parva</name>
    <name type="common">East coast fever infection agent</name>
    <dbReference type="NCBI Taxonomy" id="5875"/>
    <lineage>
        <taxon>Eukaryota</taxon>
        <taxon>Sar</taxon>
        <taxon>Alveolata</taxon>
        <taxon>Apicomplexa</taxon>
        <taxon>Aconoidasida</taxon>
        <taxon>Piroplasmida</taxon>
        <taxon>Theileriidae</taxon>
        <taxon>Theileria</taxon>
    </lineage>
</organism>
<sequence length="187" mass="21664">MVKYSREPSNLTRSAKAYGAYLRVHFKNTYETATAIKGMLVKDAKRYLNDVIERKRCVPFRKFRGGVGRCAQAKAFKHTQGRWPEKSCKFLLDLLKNLESNAEVKGLEQSKLRLEHVQVNRAPVGRRRSYRAHGRIIPFLSHPCHVELIAVEDEDHVPRHTSTEKRVVKLNKRELARMRLRTGKSLS</sequence>
<accession>Q4N4B9</accession>
<name>RL17_THEPA</name>
<feature type="chain" id="PRO_0000323423" description="Large ribosomal subunit protein uL22">
    <location>
        <begin position="1"/>
        <end position="187"/>
    </location>
</feature>
<comment type="similarity">
    <text evidence="1">Belongs to the universal ribosomal protein uL22 family.</text>
</comment>
<evidence type="ECO:0000305" key="1"/>